<gene>
    <name type="primary">ARF3</name>
</gene>
<organism>
    <name type="scientific">Homo sapiens</name>
    <name type="common">Human</name>
    <dbReference type="NCBI Taxonomy" id="9606"/>
    <lineage>
        <taxon>Eukaryota</taxon>
        <taxon>Metazoa</taxon>
        <taxon>Chordata</taxon>
        <taxon>Craniata</taxon>
        <taxon>Vertebrata</taxon>
        <taxon>Euteleostomi</taxon>
        <taxon>Mammalia</taxon>
        <taxon>Eutheria</taxon>
        <taxon>Euarchontoglires</taxon>
        <taxon>Primates</taxon>
        <taxon>Haplorrhini</taxon>
        <taxon>Catarrhini</taxon>
        <taxon>Hominidae</taxon>
        <taxon>Homo</taxon>
    </lineage>
</organism>
<proteinExistence type="evidence at protein level"/>
<evidence type="ECO:0000250" key="1"/>
<evidence type="ECO:0000255" key="2"/>
<evidence type="ECO:0000269" key="3">
    <source>
    </source>
</evidence>
<evidence type="ECO:0000269" key="4">
    <source>
    </source>
</evidence>
<evidence type="ECO:0000303" key="5">
    <source>
    </source>
</evidence>
<evidence type="ECO:0000305" key="6"/>
<evidence type="ECO:0007829" key="7">
    <source>
        <dbReference type="PDB" id="6II6"/>
    </source>
</evidence>
<comment type="function">
    <text>GTP-binding protein that functions as an allosteric activator of the cholera toxin catalytic subunit, an ADP-ribosyltransferase. Involved in protein trafficking; may modulate vesicle budding and uncoating within the Golgi apparatus.</text>
</comment>
<comment type="subunit">
    <text evidence="3 4">Interacts with PRKCABP. Interacts with PI4KB and NCS1/FREQ at the Golgi complex.</text>
</comment>
<comment type="interaction">
    <interactant intactId="EBI-641535">
        <id>P61204</id>
    </interactant>
    <interactant intactId="EBI-77613">
        <id>P05067</id>
        <label>APP</label>
    </interactant>
    <organismsDiffer>false</organismsDiffer>
    <experiments>3</experiments>
</comment>
<comment type="interaction">
    <interactant intactId="EBI-641535">
        <id>P61204</id>
    </interactant>
    <interactant intactId="EBI-739832">
        <id>Q8TBB1</id>
        <label>LNX1</label>
    </interactant>
    <organismsDiffer>false</organismsDiffer>
    <experiments>3</experiments>
</comment>
<comment type="subcellular location">
    <subcellularLocation>
        <location evidence="4">Golgi apparatus</location>
    </subcellularLocation>
    <subcellularLocation>
        <location evidence="4">Cytoplasm</location>
        <location evidence="4">Perinuclear region</location>
    </subcellularLocation>
</comment>
<comment type="alternative products">
    <event type="alternative splicing"/>
    <isoform>
        <id>P61204-1</id>
        <name>1</name>
        <sequence type="displayed"/>
    </isoform>
    <isoform>
        <id>P61204-2</id>
        <name>2</name>
        <sequence type="described" ref="VSP_056935"/>
    </isoform>
</comment>
<comment type="similarity">
    <text evidence="6">Belongs to the small GTPase superfamily. Arf family.</text>
</comment>
<accession>P61204</accession>
<accession>A8K6G8</accession>
<accession>B7ZB63</accession>
<accession>P16587</accession>
<name>ARF3_HUMAN</name>
<keyword id="KW-0002">3D-structure</keyword>
<keyword id="KW-0025">Alternative splicing</keyword>
<keyword id="KW-0963">Cytoplasm</keyword>
<keyword id="KW-0931">ER-Golgi transport</keyword>
<keyword id="KW-0333">Golgi apparatus</keyword>
<keyword id="KW-0342">GTP-binding</keyword>
<keyword id="KW-0449">Lipoprotein</keyword>
<keyword id="KW-0519">Myristate</keyword>
<keyword id="KW-0547">Nucleotide-binding</keyword>
<keyword id="KW-0653">Protein transport</keyword>
<keyword id="KW-1267">Proteomics identification</keyword>
<keyword id="KW-1185">Reference proteome</keyword>
<keyword id="KW-0813">Transport</keyword>
<protein>
    <recommendedName>
        <fullName>ADP-ribosylation factor 3</fullName>
    </recommendedName>
</protein>
<feature type="initiator methionine" description="Removed" evidence="2">
    <location>
        <position position="1"/>
    </location>
</feature>
<feature type="chain" id="PRO_0000207386" description="ADP-ribosylation factor 3">
    <location>
        <begin position="2"/>
        <end position="181"/>
    </location>
</feature>
<feature type="binding site" evidence="1">
    <location>
        <begin position="24"/>
        <end position="31"/>
    </location>
    <ligand>
        <name>GTP</name>
        <dbReference type="ChEBI" id="CHEBI:37565"/>
    </ligand>
</feature>
<feature type="binding site" evidence="1">
    <location>
        <begin position="67"/>
        <end position="71"/>
    </location>
    <ligand>
        <name>GTP</name>
        <dbReference type="ChEBI" id="CHEBI:37565"/>
    </ligand>
</feature>
<feature type="binding site" evidence="1">
    <location>
        <begin position="126"/>
        <end position="129"/>
    </location>
    <ligand>
        <name>GTP</name>
        <dbReference type="ChEBI" id="CHEBI:37565"/>
    </ligand>
</feature>
<feature type="lipid moiety-binding region" description="N-myristoyl glycine" evidence="2">
    <location>
        <position position="2"/>
    </location>
</feature>
<feature type="splice variant" id="VSP_056935" description="In isoform 2." evidence="5">
    <location>
        <begin position="50"/>
        <end position="86"/>
    </location>
</feature>
<feature type="strand" evidence="7">
    <location>
        <begin position="16"/>
        <end position="23"/>
    </location>
</feature>
<feature type="helix" evidence="7">
    <location>
        <begin position="30"/>
        <end position="39"/>
    </location>
</feature>
<feature type="strand" evidence="7">
    <location>
        <begin position="49"/>
        <end position="58"/>
    </location>
</feature>
<feature type="strand" evidence="7">
    <location>
        <begin position="61"/>
        <end position="68"/>
    </location>
</feature>
<feature type="helix" evidence="7">
    <location>
        <begin position="72"/>
        <end position="81"/>
    </location>
</feature>
<feature type="strand" evidence="7">
    <location>
        <begin position="87"/>
        <end position="93"/>
    </location>
</feature>
<feature type="helix" evidence="7">
    <location>
        <begin position="100"/>
        <end position="111"/>
    </location>
</feature>
<feature type="helix" evidence="7">
    <location>
        <begin position="114"/>
        <end position="116"/>
    </location>
</feature>
<feature type="strand" evidence="7">
    <location>
        <begin position="120"/>
        <end position="126"/>
    </location>
</feature>
<feature type="helix" evidence="7">
    <location>
        <begin position="136"/>
        <end position="142"/>
    </location>
</feature>
<feature type="helix" evidence="7">
    <location>
        <begin position="145"/>
        <end position="147"/>
    </location>
</feature>
<feature type="strand" evidence="7">
    <location>
        <begin position="153"/>
        <end position="157"/>
    </location>
</feature>
<feature type="turn" evidence="7">
    <location>
        <begin position="160"/>
        <end position="163"/>
    </location>
</feature>
<feature type="helix" evidence="7">
    <location>
        <begin position="166"/>
        <end position="176"/>
    </location>
</feature>
<reference key="1">
    <citation type="journal article" date="1989" name="Proc. Natl. Acad. Sci. U.S.A.">
        <title>Molecular cloning, characterization, and expression of human ADP-ribosylation factors: two guanine nucleotide-dependent activators of cholera toxin.</title>
        <authorList>
            <person name="Bobak D.A."/>
            <person name="Nightingale M.S."/>
            <person name="Murtagh J.J. Jr."/>
            <person name="Price S.R."/>
            <person name="Moss J."/>
            <person name="Vaughan M."/>
        </authorList>
    </citation>
    <scope>NUCLEOTIDE SEQUENCE [MRNA] (ISOFORM 1)</scope>
    <source>
        <tissue>Cerebellum</tissue>
    </source>
</reference>
<reference key="2">
    <citation type="journal article" date="1991" name="J. Biol. Chem.">
        <title>Isolation and characterization of the human gene for ADP-ribosylation factor 3, a 20-kDa guanine nucleotide-binding protein activator of cholera toxin.</title>
        <authorList>
            <person name="Tsai S.C."/>
            <person name="Haun R.S."/>
            <person name="Tsuchiya M."/>
            <person name="Moss J."/>
            <person name="Vaughan M."/>
        </authorList>
    </citation>
    <scope>NUCLEOTIDE SEQUENCE [MRNA] (ISOFORM 1)</scope>
</reference>
<reference key="3">
    <citation type="submission" date="2002-03" db="EMBL/GenBank/DDBJ databases">
        <title>cDNA clones of human proteins involved in signal transduction sequenced by the Guthrie cDNA resource center (www.cdna.org).</title>
        <authorList>
            <person name="Puhl H.L. III"/>
            <person name="Ikeda S.R."/>
            <person name="Aronstam R.S."/>
        </authorList>
    </citation>
    <scope>NUCLEOTIDE SEQUENCE [LARGE SCALE MRNA] (ISOFORM 1)</scope>
    <source>
        <tissue>Brain</tissue>
    </source>
</reference>
<reference key="4">
    <citation type="submission" date="2003-05" db="EMBL/GenBank/DDBJ databases">
        <title>Cloning of human full-length CDSs in BD Creator(TM) system donor vector.</title>
        <authorList>
            <person name="Kalnine N."/>
            <person name="Chen X."/>
            <person name="Rolfs A."/>
            <person name="Halleck A."/>
            <person name="Hines L."/>
            <person name="Eisenstein S."/>
            <person name="Koundinya M."/>
            <person name="Raphael J."/>
            <person name="Moreira D."/>
            <person name="Kelley T."/>
            <person name="LaBaer J."/>
            <person name="Lin Y."/>
            <person name="Phelan M."/>
            <person name="Farmer A."/>
        </authorList>
    </citation>
    <scope>NUCLEOTIDE SEQUENCE [LARGE SCALE MRNA] (ISOFORM 1)</scope>
</reference>
<reference key="5">
    <citation type="journal article" date="2004" name="Nat. Genet.">
        <title>Complete sequencing and characterization of 21,243 full-length human cDNAs.</title>
        <authorList>
            <person name="Ota T."/>
            <person name="Suzuki Y."/>
            <person name="Nishikawa T."/>
            <person name="Otsuki T."/>
            <person name="Sugiyama T."/>
            <person name="Irie R."/>
            <person name="Wakamatsu A."/>
            <person name="Hayashi K."/>
            <person name="Sato H."/>
            <person name="Nagai K."/>
            <person name="Kimura K."/>
            <person name="Makita H."/>
            <person name="Sekine M."/>
            <person name="Obayashi M."/>
            <person name="Nishi T."/>
            <person name="Shibahara T."/>
            <person name="Tanaka T."/>
            <person name="Ishii S."/>
            <person name="Yamamoto J."/>
            <person name="Saito K."/>
            <person name="Kawai Y."/>
            <person name="Isono Y."/>
            <person name="Nakamura Y."/>
            <person name="Nagahari K."/>
            <person name="Murakami K."/>
            <person name="Yasuda T."/>
            <person name="Iwayanagi T."/>
            <person name="Wagatsuma M."/>
            <person name="Shiratori A."/>
            <person name="Sudo H."/>
            <person name="Hosoiri T."/>
            <person name="Kaku Y."/>
            <person name="Kodaira H."/>
            <person name="Kondo H."/>
            <person name="Sugawara M."/>
            <person name="Takahashi M."/>
            <person name="Kanda K."/>
            <person name="Yokoi T."/>
            <person name="Furuya T."/>
            <person name="Kikkawa E."/>
            <person name="Omura Y."/>
            <person name="Abe K."/>
            <person name="Kamihara K."/>
            <person name="Katsuta N."/>
            <person name="Sato K."/>
            <person name="Tanikawa M."/>
            <person name="Yamazaki M."/>
            <person name="Ninomiya K."/>
            <person name="Ishibashi T."/>
            <person name="Yamashita H."/>
            <person name="Murakawa K."/>
            <person name="Fujimori K."/>
            <person name="Tanai H."/>
            <person name="Kimata M."/>
            <person name="Watanabe M."/>
            <person name="Hiraoka S."/>
            <person name="Chiba Y."/>
            <person name="Ishida S."/>
            <person name="Ono Y."/>
            <person name="Takiguchi S."/>
            <person name="Watanabe S."/>
            <person name="Yosida M."/>
            <person name="Hotuta T."/>
            <person name="Kusano J."/>
            <person name="Kanehori K."/>
            <person name="Takahashi-Fujii A."/>
            <person name="Hara H."/>
            <person name="Tanase T.-O."/>
            <person name="Nomura Y."/>
            <person name="Togiya S."/>
            <person name="Komai F."/>
            <person name="Hara R."/>
            <person name="Takeuchi K."/>
            <person name="Arita M."/>
            <person name="Imose N."/>
            <person name="Musashino K."/>
            <person name="Yuuki H."/>
            <person name="Oshima A."/>
            <person name="Sasaki N."/>
            <person name="Aotsuka S."/>
            <person name="Yoshikawa Y."/>
            <person name="Matsunawa H."/>
            <person name="Ichihara T."/>
            <person name="Shiohata N."/>
            <person name="Sano S."/>
            <person name="Moriya S."/>
            <person name="Momiyama H."/>
            <person name="Satoh N."/>
            <person name="Takami S."/>
            <person name="Terashima Y."/>
            <person name="Suzuki O."/>
            <person name="Nakagawa S."/>
            <person name="Senoh A."/>
            <person name="Mizoguchi H."/>
            <person name="Goto Y."/>
            <person name="Shimizu F."/>
            <person name="Wakebe H."/>
            <person name="Hishigaki H."/>
            <person name="Watanabe T."/>
            <person name="Sugiyama A."/>
            <person name="Takemoto M."/>
            <person name="Kawakami B."/>
            <person name="Yamazaki M."/>
            <person name="Watanabe K."/>
            <person name="Kumagai A."/>
            <person name="Itakura S."/>
            <person name="Fukuzumi Y."/>
            <person name="Fujimori Y."/>
            <person name="Komiyama M."/>
            <person name="Tashiro H."/>
            <person name="Tanigami A."/>
            <person name="Fujiwara T."/>
            <person name="Ono T."/>
            <person name="Yamada K."/>
            <person name="Fujii Y."/>
            <person name="Ozaki K."/>
            <person name="Hirao M."/>
            <person name="Ohmori Y."/>
            <person name="Kawabata A."/>
            <person name="Hikiji T."/>
            <person name="Kobatake N."/>
            <person name="Inagaki H."/>
            <person name="Ikema Y."/>
            <person name="Okamoto S."/>
            <person name="Okitani R."/>
            <person name="Kawakami T."/>
            <person name="Noguchi S."/>
            <person name="Itoh T."/>
            <person name="Shigeta K."/>
            <person name="Senba T."/>
            <person name="Matsumura K."/>
            <person name="Nakajima Y."/>
            <person name="Mizuno T."/>
            <person name="Morinaga M."/>
            <person name="Sasaki M."/>
            <person name="Togashi T."/>
            <person name="Oyama M."/>
            <person name="Hata H."/>
            <person name="Watanabe M."/>
            <person name="Komatsu T."/>
            <person name="Mizushima-Sugano J."/>
            <person name="Satoh T."/>
            <person name="Shirai Y."/>
            <person name="Takahashi Y."/>
            <person name="Nakagawa K."/>
            <person name="Okumura K."/>
            <person name="Nagase T."/>
            <person name="Nomura N."/>
            <person name="Kikuchi H."/>
            <person name="Masuho Y."/>
            <person name="Yamashita R."/>
            <person name="Nakai K."/>
            <person name="Yada T."/>
            <person name="Nakamura Y."/>
            <person name="Ohara O."/>
            <person name="Isogai T."/>
            <person name="Sugano S."/>
        </authorList>
    </citation>
    <scope>NUCLEOTIDE SEQUENCE [LARGE SCALE MRNA] (ISOFORMS 1 AND 2)</scope>
    <source>
        <tissue>Placenta</tissue>
        <tissue>Trachea</tissue>
    </source>
</reference>
<reference key="6">
    <citation type="journal article" date="2006" name="Nature">
        <title>The finished DNA sequence of human chromosome 12.</title>
        <authorList>
            <person name="Scherer S.E."/>
            <person name="Muzny D.M."/>
            <person name="Buhay C.J."/>
            <person name="Chen R."/>
            <person name="Cree A."/>
            <person name="Ding Y."/>
            <person name="Dugan-Rocha S."/>
            <person name="Gill R."/>
            <person name="Gunaratne P."/>
            <person name="Harris R.A."/>
            <person name="Hawes A.C."/>
            <person name="Hernandez J."/>
            <person name="Hodgson A.V."/>
            <person name="Hume J."/>
            <person name="Jackson A."/>
            <person name="Khan Z.M."/>
            <person name="Kovar-Smith C."/>
            <person name="Lewis L.R."/>
            <person name="Lozado R.J."/>
            <person name="Metzker M.L."/>
            <person name="Milosavljevic A."/>
            <person name="Miner G.R."/>
            <person name="Montgomery K.T."/>
            <person name="Morgan M.B."/>
            <person name="Nazareth L.V."/>
            <person name="Scott G."/>
            <person name="Sodergren E."/>
            <person name="Song X.-Z."/>
            <person name="Steffen D."/>
            <person name="Lovering R.C."/>
            <person name="Wheeler D.A."/>
            <person name="Worley K.C."/>
            <person name="Yuan Y."/>
            <person name="Zhang Z."/>
            <person name="Adams C.Q."/>
            <person name="Ansari-Lari M.A."/>
            <person name="Ayele M."/>
            <person name="Brown M.J."/>
            <person name="Chen G."/>
            <person name="Chen Z."/>
            <person name="Clerc-Blankenburg K.P."/>
            <person name="Davis C."/>
            <person name="Delgado O."/>
            <person name="Dinh H.H."/>
            <person name="Draper H."/>
            <person name="Gonzalez-Garay M.L."/>
            <person name="Havlak P."/>
            <person name="Jackson L.R."/>
            <person name="Jacob L.S."/>
            <person name="Kelly S.H."/>
            <person name="Li L."/>
            <person name="Li Z."/>
            <person name="Liu J."/>
            <person name="Liu W."/>
            <person name="Lu J."/>
            <person name="Maheshwari M."/>
            <person name="Nguyen B.-V."/>
            <person name="Okwuonu G.O."/>
            <person name="Pasternak S."/>
            <person name="Perez L.M."/>
            <person name="Plopper F.J.H."/>
            <person name="Santibanez J."/>
            <person name="Shen H."/>
            <person name="Tabor P.E."/>
            <person name="Verduzco D."/>
            <person name="Waldron L."/>
            <person name="Wang Q."/>
            <person name="Williams G.A."/>
            <person name="Zhang J."/>
            <person name="Zhou J."/>
            <person name="Allen C.C."/>
            <person name="Amin A.G."/>
            <person name="Anyalebechi V."/>
            <person name="Bailey M."/>
            <person name="Barbaria J.A."/>
            <person name="Bimage K.E."/>
            <person name="Bryant N.P."/>
            <person name="Burch P.E."/>
            <person name="Burkett C.E."/>
            <person name="Burrell K.L."/>
            <person name="Calderon E."/>
            <person name="Cardenas V."/>
            <person name="Carter K."/>
            <person name="Casias K."/>
            <person name="Cavazos I."/>
            <person name="Cavazos S.R."/>
            <person name="Ceasar H."/>
            <person name="Chacko J."/>
            <person name="Chan S.N."/>
            <person name="Chavez D."/>
            <person name="Christopoulos C."/>
            <person name="Chu J."/>
            <person name="Cockrell R."/>
            <person name="Cox C.D."/>
            <person name="Dang M."/>
            <person name="Dathorne S.R."/>
            <person name="David R."/>
            <person name="Davis C.M."/>
            <person name="Davy-Carroll L."/>
            <person name="Deshazo D.R."/>
            <person name="Donlin J.E."/>
            <person name="D'Souza L."/>
            <person name="Eaves K.A."/>
            <person name="Egan A."/>
            <person name="Emery-Cohen A.J."/>
            <person name="Escotto M."/>
            <person name="Flagg N."/>
            <person name="Forbes L.D."/>
            <person name="Gabisi A.M."/>
            <person name="Garza M."/>
            <person name="Hamilton C."/>
            <person name="Henderson N."/>
            <person name="Hernandez O."/>
            <person name="Hines S."/>
            <person name="Hogues M.E."/>
            <person name="Huang M."/>
            <person name="Idlebird D.G."/>
            <person name="Johnson R."/>
            <person name="Jolivet A."/>
            <person name="Jones S."/>
            <person name="Kagan R."/>
            <person name="King L.M."/>
            <person name="Leal B."/>
            <person name="Lebow H."/>
            <person name="Lee S."/>
            <person name="LeVan J.M."/>
            <person name="Lewis L.C."/>
            <person name="London P."/>
            <person name="Lorensuhewa L.M."/>
            <person name="Loulseged H."/>
            <person name="Lovett D.A."/>
            <person name="Lucier A."/>
            <person name="Lucier R.L."/>
            <person name="Ma J."/>
            <person name="Madu R.C."/>
            <person name="Mapua P."/>
            <person name="Martindale A.D."/>
            <person name="Martinez E."/>
            <person name="Massey E."/>
            <person name="Mawhiney S."/>
            <person name="Meador M.G."/>
            <person name="Mendez S."/>
            <person name="Mercado C."/>
            <person name="Mercado I.C."/>
            <person name="Merritt C.E."/>
            <person name="Miner Z.L."/>
            <person name="Minja E."/>
            <person name="Mitchell T."/>
            <person name="Mohabbat F."/>
            <person name="Mohabbat K."/>
            <person name="Montgomery B."/>
            <person name="Moore N."/>
            <person name="Morris S."/>
            <person name="Munidasa M."/>
            <person name="Ngo R.N."/>
            <person name="Nguyen N.B."/>
            <person name="Nickerson E."/>
            <person name="Nwaokelemeh O.O."/>
            <person name="Nwokenkwo S."/>
            <person name="Obregon M."/>
            <person name="Oguh M."/>
            <person name="Oragunye N."/>
            <person name="Oviedo R.J."/>
            <person name="Parish B.J."/>
            <person name="Parker D.N."/>
            <person name="Parrish J."/>
            <person name="Parks K.L."/>
            <person name="Paul H.A."/>
            <person name="Payton B.A."/>
            <person name="Perez A."/>
            <person name="Perrin W."/>
            <person name="Pickens A."/>
            <person name="Primus E.L."/>
            <person name="Pu L.-L."/>
            <person name="Puazo M."/>
            <person name="Quiles M.M."/>
            <person name="Quiroz J.B."/>
            <person name="Rabata D."/>
            <person name="Reeves K."/>
            <person name="Ruiz S.J."/>
            <person name="Shao H."/>
            <person name="Sisson I."/>
            <person name="Sonaike T."/>
            <person name="Sorelle R.P."/>
            <person name="Sutton A.E."/>
            <person name="Svatek A.F."/>
            <person name="Svetz L.A."/>
            <person name="Tamerisa K.S."/>
            <person name="Taylor T.R."/>
            <person name="Teague B."/>
            <person name="Thomas N."/>
            <person name="Thorn R.D."/>
            <person name="Trejos Z.Y."/>
            <person name="Trevino B.K."/>
            <person name="Ukegbu O.N."/>
            <person name="Urban J.B."/>
            <person name="Vasquez L.I."/>
            <person name="Vera V.A."/>
            <person name="Villasana D.M."/>
            <person name="Wang L."/>
            <person name="Ward-Moore S."/>
            <person name="Warren J.T."/>
            <person name="Wei X."/>
            <person name="White F."/>
            <person name="Williamson A.L."/>
            <person name="Wleczyk R."/>
            <person name="Wooden H.S."/>
            <person name="Wooden S.H."/>
            <person name="Yen J."/>
            <person name="Yoon L."/>
            <person name="Yoon V."/>
            <person name="Zorrilla S.E."/>
            <person name="Nelson D."/>
            <person name="Kucherlapati R."/>
            <person name="Weinstock G."/>
            <person name="Gibbs R.A."/>
        </authorList>
    </citation>
    <scope>NUCLEOTIDE SEQUENCE [LARGE SCALE GENOMIC DNA]</scope>
</reference>
<reference key="7">
    <citation type="submission" date="2005-07" db="EMBL/GenBank/DDBJ databases">
        <authorList>
            <person name="Mural R.J."/>
            <person name="Istrail S."/>
            <person name="Sutton G.G."/>
            <person name="Florea L."/>
            <person name="Halpern A.L."/>
            <person name="Mobarry C.M."/>
            <person name="Lippert R."/>
            <person name="Walenz B."/>
            <person name="Shatkay H."/>
            <person name="Dew I."/>
            <person name="Miller J.R."/>
            <person name="Flanigan M.J."/>
            <person name="Edwards N.J."/>
            <person name="Bolanos R."/>
            <person name="Fasulo D."/>
            <person name="Halldorsson B.V."/>
            <person name="Hannenhalli S."/>
            <person name="Turner R."/>
            <person name="Yooseph S."/>
            <person name="Lu F."/>
            <person name="Nusskern D.R."/>
            <person name="Shue B.C."/>
            <person name="Zheng X.H."/>
            <person name="Zhong F."/>
            <person name="Delcher A.L."/>
            <person name="Huson D.H."/>
            <person name="Kravitz S.A."/>
            <person name="Mouchard L."/>
            <person name="Reinert K."/>
            <person name="Remington K.A."/>
            <person name="Clark A.G."/>
            <person name="Waterman M.S."/>
            <person name="Eichler E.E."/>
            <person name="Adams M.D."/>
            <person name="Hunkapiller M.W."/>
            <person name="Myers E.W."/>
            <person name="Venter J.C."/>
        </authorList>
    </citation>
    <scope>NUCLEOTIDE SEQUENCE [LARGE SCALE GENOMIC DNA]</scope>
</reference>
<reference key="8">
    <citation type="journal article" date="2004" name="Genome Res.">
        <title>The status, quality, and expansion of the NIH full-length cDNA project: the Mammalian Gene Collection (MGC).</title>
        <authorList>
            <consortium name="The MGC Project Team"/>
        </authorList>
    </citation>
    <scope>NUCLEOTIDE SEQUENCE [LARGE SCALE MRNA] (ISOFORM 1)</scope>
    <source>
        <tissue>Brain</tissue>
        <tissue>Lung</tissue>
        <tissue>Skin</tissue>
    </source>
</reference>
<reference key="9">
    <citation type="journal article" date="2000" name="Biochem. Biophys. Res. Commun.">
        <title>Interaction of the PDZ domain of human PICK1 with class I ADP-ribosylation factors.</title>
        <authorList>
            <person name="Takeya R."/>
            <person name="Takeshige K."/>
            <person name="Sumimoto H."/>
        </authorList>
    </citation>
    <scope>INTERACTION WITH PRKCABP</scope>
</reference>
<reference key="10">
    <citation type="journal article" date="2007" name="Traffic">
        <title>Specificity, promiscuity and localization of ARF protein interactions with NCS-1 and phosphatidylinositol-4 kinase-III beta.</title>
        <authorList>
            <person name="Haynes L.P."/>
            <person name="Sherwood M.W."/>
            <person name="Dolman N.J."/>
            <person name="Burgoyne R.D."/>
        </authorList>
    </citation>
    <scope>INTERACTION WITH PI4KB AND NCS1</scope>
    <scope>SUBCELLULAR LOCATION</scope>
</reference>
<sequence length="181" mass="20601">MGNIFGNLLKSLIGKKEMRILMVGLDAAGKTTILYKLKLGEIVTTIPTIGFNVETVEYKNISFTVWDVGGQDKIRPLWRHYFQNTQGLIFVVDSNDRERVNEAREELMRMLAEDELRDAVLLVFANKQDLPNAMNAAEITDKLGLHSLRHRNWYIQATCATSGDGLYEGLDWLANQLKNKK</sequence>
<dbReference type="EMBL" id="M74493">
    <property type="protein sequence ID" value="AAA58359.1"/>
    <property type="molecule type" value="Genomic_DNA"/>
</dbReference>
<dbReference type="EMBL" id="M33384">
    <property type="protein sequence ID" value="AAA83931.1"/>
    <property type="molecule type" value="mRNA"/>
</dbReference>
<dbReference type="EMBL" id="M74491">
    <property type="protein sequence ID" value="AAB59425.1"/>
    <property type="molecule type" value="mRNA"/>
</dbReference>
<dbReference type="EMBL" id="AF493882">
    <property type="protein sequence ID" value="AAM12596.1"/>
    <property type="molecule type" value="mRNA"/>
</dbReference>
<dbReference type="EMBL" id="BT006670">
    <property type="protein sequence ID" value="AAP35316.1"/>
    <property type="molecule type" value="mRNA"/>
</dbReference>
<dbReference type="EMBL" id="AK291633">
    <property type="protein sequence ID" value="BAF84322.1"/>
    <property type="molecule type" value="mRNA"/>
</dbReference>
<dbReference type="EMBL" id="AK316528">
    <property type="protein sequence ID" value="BAH14899.1"/>
    <property type="molecule type" value="mRNA"/>
</dbReference>
<dbReference type="EMBL" id="AC073610">
    <property type="status" value="NOT_ANNOTATED_CDS"/>
    <property type="molecule type" value="Genomic_DNA"/>
</dbReference>
<dbReference type="EMBL" id="CH471111">
    <property type="protein sequence ID" value="EAW58026.1"/>
    <property type="molecule type" value="Genomic_DNA"/>
</dbReference>
<dbReference type="EMBL" id="BC007647">
    <property type="protein sequence ID" value="AAH07647.1"/>
    <property type="molecule type" value="mRNA"/>
</dbReference>
<dbReference type="EMBL" id="BC007762">
    <property type="protein sequence ID" value="AAH07762.1"/>
    <property type="molecule type" value="mRNA"/>
</dbReference>
<dbReference type="EMBL" id="BC017565">
    <property type="protein sequence ID" value="AAH17565.1"/>
    <property type="molecule type" value="mRNA"/>
</dbReference>
<dbReference type="EMBL" id="BC028402">
    <property type="protein sequence ID" value="AAH28402.1"/>
    <property type="molecule type" value="mRNA"/>
</dbReference>
<dbReference type="CCDS" id="CCDS8774.1">
    <molecule id="P61204-1"/>
</dbReference>
<dbReference type="PIR" id="A41570">
    <property type="entry name" value="A41570"/>
</dbReference>
<dbReference type="RefSeq" id="NP_001399843.1">
    <molecule id="P61204-1"/>
    <property type="nucleotide sequence ID" value="NM_001412914.1"/>
</dbReference>
<dbReference type="RefSeq" id="NP_001399844.1">
    <molecule id="P61204-1"/>
    <property type="nucleotide sequence ID" value="NM_001412915.1"/>
</dbReference>
<dbReference type="RefSeq" id="NP_001399845.1">
    <molecule id="P61204-1"/>
    <property type="nucleotide sequence ID" value="NM_001412916.1"/>
</dbReference>
<dbReference type="RefSeq" id="NP_001399847.1">
    <molecule id="P61204-1"/>
    <property type="nucleotide sequence ID" value="NM_001412918.1"/>
</dbReference>
<dbReference type="RefSeq" id="NP_001399849.1">
    <molecule id="P61204-1"/>
    <property type="nucleotide sequence ID" value="NM_001412920.1"/>
</dbReference>
<dbReference type="RefSeq" id="NP_001399855.1">
    <molecule id="P61204-1"/>
    <property type="nucleotide sequence ID" value="NM_001412926.1"/>
</dbReference>
<dbReference type="RefSeq" id="NP_001399857.1">
    <molecule id="P61204-1"/>
    <property type="nucleotide sequence ID" value="NM_001412928.1"/>
</dbReference>
<dbReference type="RefSeq" id="NP_001399859.1">
    <molecule id="P61204-1"/>
    <property type="nucleotide sequence ID" value="NM_001412930.1"/>
</dbReference>
<dbReference type="RefSeq" id="NP_001399860.1">
    <molecule id="P61204-1"/>
    <property type="nucleotide sequence ID" value="NM_001412931.1"/>
</dbReference>
<dbReference type="RefSeq" id="NP_001399861.1">
    <molecule id="P61204-2"/>
    <property type="nucleotide sequence ID" value="NM_001412932.1"/>
</dbReference>
<dbReference type="RefSeq" id="NP_001650.1">
    <molecule id="P61204-1"/>
    <property type="nucleotide sequence ID" value="NM_001659.3"/>
</dbReference>
<dbReference type="RefSeq" id="XP_005268913.1">
    <property type="nucleotide sequence ID" value="XM_005268856.1"/>
</dbReference>
<dbReference type="RefSeq" id="XP_024304740.1">
    <molecule id="P61204-1"/>
    <property type="nucleotide sequence ID" value="XM_024448972.2"/>
</dbReference>
<dbReference type="RefSeq" id="XP_054227981.1">
    <molecule id="P61204-1"/>
    <property type="nucleotide sequence ID" value="XM_054372006.1"/>
</dbReference>
<dbReference type="PDB" id="6II6">
    <property type="method" value="X-ray"/>
    <property type="resolution" value="2.10 A"/>
    <property type="chains" value="C/D=13-176"/>
</dbReference>
<dbReference type="PDB" id="8P50">
    <property type="method" value="EM"/>
    <property type="resolution" value="4.04 A"/>
    <property type="chains" value="B=18-181"/>
</dbReference>
<dbReference type="PDBsum" id="6II6"/>
<dbReference type="PDBsum" id="8P50"/>
<dbReference type="EMDB" id="EMD-17435"/>
<dbReference type="SMR" id="P61204"/>
<dbReference type="BioGRID" id="106872">
    <property type="interactions" value="138"/>
</dbReference>
<dbReference type="FunCoup" id="P61204">
    <property type="interactions" value="2538"/>
</dbReference>
<dbReference type="IntAct" id="P61204">
    <property type="interactions" value="31"/>
</dbReference>
<dbReference type="MINT" id="P61204"/>
<dbReference type="STRING" id="9606.ENSP00000256682"/>
<dbReference type="GlyCosmos" id="P61204">
    <property type="glycosylation" value="3 sites, 1 glycan"/>
</dbReference>
<dbReference type="GlyGen" id="P61204">
    <property type="glycosylation" value="4 sites, 1 N-linked glycan (1 site), 1 O-linked glycan (3 sites)"/>
</dbReference>
<dbReference type="iPTMnet" id="P61204"/>
<dbReference type="MetOSite" id="P61204"/>
<dbReference type="PhosphoSitePlus" id="P61204"/>
<dbReference type="SwissPalm" id="P61204"/>
<dbReference type="BioMuta" id="ARF3"/>
<dbReference type="DMDM" id="47117657"/>
<dbReference type="OGP" id="P16587"/>
<dbReference type="jPOST" id="P61204"/>
<dbReference type="MassIVE" id="P61204"/>
<dbReference type="PaxDb" id="9606-ENSP00000256682"/>
<dbReference type="PeptideAtlas" id="P61204"/>
<dbReference type="PRIDE" id="P61204"/>
<dbReference type="ProteomicsDB" id="57274">
    <molecule id="P61204-1"/>
</dbReference>
<dbReference type="ProteomicsDB" id="7097"/>
<dbReference type="Pumba" id="P61204"/>
<dbReference type="TopDownProteomics" id="P61204-1">
    <molecule id="P61204-1"/>
</dbReference>
<dbReference type="Antibodypedia" id="25743">
    <property type="antibodies" value="125 antibodies from 28 providers"/>
</dbReference>
<dbReference type="DNASU" id="377"/>
<dbReference type="Ensembl" id="ENST00000256682.9">
    <molecule id="P61204-1"/>
    <property type="protein sequence ID" value="ENSP00000256682.4"/>
    <property type="gene ID" value="ENSG00000134287.10"/>
</dbReference>
<dbReference type="Ensembl" id="ENST00000447318.6">
    <molecule id="P61204-2"/>
    <property type="protein sequence ID" value="ENSP00000395370.2"/>
    <property type="gene ID" value="ENSG00000134287.10"/>
</dbReference>
<dbReference type="Ensembl" id="ENST00000541959.5">
    <molecule id="P61204-1"/>
    <property type="protein sequence ID" value="ENSP00000438510.1"/>
    <property type="gene ID" value="ENSG00000134287.10"/>
</dbReference>
<dbReference type="GeneID" id="377"/>
<dbReference type="KEGG" id="hsa:377"/>
<dbReference type="MANE-Select" id="ENST00000256682.9">
    <property type="protein sequence ID" value="ENSP00000256682.4"/>
    <property type="RefSeq nucleotide sequence ID" value="NM_001659.3"/>
    <property type="RefSeq protein sequence ID" value="NP_001650.1"/>
</dbReference>
<dbReference type="UCSC" id="uc001rsr.3">
    <molecule id="P61204-1"/>
    <property type="organism name" value="human"/>
</dbReference>
<dbReference type="AGR" id="HGNC:654"/>
<dbReference type="CTD" id="377"/>
<dbReference type="DisGeNET" id="377"/>
<dbReference type="GeneCards" id="ARF3"/>
<dbReference type="HGNC" id="HGNC:654">
    <property type="gene designation" value="ARF3"/>
</dbReference>
<dbReference type="HPA" id="ENSG00000134287">
    <property type="expression patterns" value="Tissue enhanced (brain)"/>
</dbReference>
<dbReference type="MalaCards" id="ARF3"/>
<dbReference type="MIM" id="103190">
    <property type="type" value="gene"/>
</dbReference>
<dbReference type="neXtProt" id="NX_P61204"/>
<dbReference type="OpenTargets" id="ENSG00000134287"/>
<dbReference type="Orphanet" id="178469">
    <property type="disease" value="Autosomal dominant non-syndromic intellectual disability"/>
</dbReference>
<dbReference type="PharmGKB" id="PA24936"/>
<dbReference type="VEuPathDB" id="HostDB:ENSG00000134287"/>
<dbReference type="eggNOG" id="KOG0070">
    <property type="taxonomic scope" value="Eukaryota"/>
</dbReference>
<dbReference type="GeneTree" id="ENSGT00950000183080"/>
<dbReference type="HOGENOM" id="CLU_040729_9_3_1"/>
<dbReference type="InParanoid" id="P61204"/>
<dbReference type="OMA" id="HEGLHWL"/>
<dbReference type="OrthoDB" id="2011769at2759"/>
<dbReference type="PAN-GO" id="P61204">
    <property type="GO annotations" value="5 GO annotations based on evolutionary models"/>
</dbReference>
<dbReference type="PhylomeDB" id="P61204"/>
<dbReference type="TreeFam" id="TF300808"/>
<dbReference type="PathwayCommons" id="P61204"/>
<dbReference type="Reactome" id="R-HSA-1660514">
    <property type="pathway name" value="Synthesis of PIPs at the Golgi membrane"/>
</dbReference>
<dbReference type="Reactome" id="R-HSA-6807878">
    <property type="pathway name" value="COPI-mediated anterograde transport"/>
</dbReference>
<dbReference type="Reactome" id="R-HSA-6811434">
    <property type="pathway name" value="COPI-dependent Golgi-to-ER retrograde traffic"/>
</dbReference>
<dbReference type="SignaLink" id="P61204"/>
<dbReference type="SIGNOR" id="P61204"/>
<dbReference type="BioGRID-ORCS" id="377">
    <property type="hits" value="39 hits in 1138 CRISPR screens"/>
</dbReference>
<dbReference type="CD-CODE" id="FB4E32DD">
    <property type="entry name" value="Presynaptic clusters and postsynaptic densities"/>
</dbReference>
<dbReference type="ChiTaRS" id="ARF3">
    <property type="organism name" value="human"/>
</dbReference>
<dbReference type="GeneWiki" id="ARF3"/>
<dbReference type="GenomeRNAi" id="377"/>
<dbReference type="Pharos" id="P61204">
    <property type="development level" value="Tbio"/>
</dbReference>
<dbReference type="PRO" id="PR:P61204"/>
<dbReference type="Proteomes" id="UP000005640">
    <property type="component" value="Chromosome 12"/>
</dbReference>
<dbReference type="RNAct" id="P61204">
    <property type="molecule type" value="protein"/>
</dbReference>
<dbReference type="Bgee" id="ENSG00000134287">
    <property type="expression patterns" value="Expressed in prefrontal cortex and 211 other cell types or tissues"/>
</dbReference>
<dbReference type="ExpressionAtlas" id="P61204">
    <property type="expression patterns" value="baseline and differential"/>
</dbReference>
<dbReference type="GO" id="GO:0005737">
    <property type="term" value="C:cytoplasm"/>
    <property type="evidence" value="ECO:0000318"/>
    <property type="project" value="GO_Central"/>
</dbReference>
<dbReference type="GO" id="GO:0070062">
    <property type="term" value="C:extracellular exosome"/>
    <property type="evidence" value="ECO:0007005"/>
    <property type="project" value="UniProtKB"/>
</dbReference>
<dbReference type="GO" id="GO:0000139">
    <property type="term" value="C:Golgi membrane"/>
    <property type="evidence" value="ECO:0000304"/>
    <property type="project" value="Reactome"/>
</dbReference>
<dbReference type="GO" id="GO:0048471">
    <property type="term" value="C:perinuclear region of cytoplasm"/>
    <property type="evidence" value="ECO:0007669"/>
    <property type="project" value="UniProtKB-SubCell"/>
</dbReference>
<dbReference type="GO" id="GO:0005886">
    <property type="term" value="C:plasma membrane"/>
    <property type="evidence" value="ECO:0000318"/>
    <property type="project" value="GO_Central"/>
</dbReference>
<dbReference type="GO" id="GO:0005525">
    <property type="term" value="F:GTP binding"/>
    <property type="evidence" value="ECO:0000318"/>
    <property type="project" value="GO_Central"/>
</dbReference>
<dbReference type="GO" id="GO:0003924">
    <property type="term" value="F:GTPase activity"/>
    <property type="evidence" value="ECO:0000304"/>
    <property type="project" value="ProtInc"/>
</dbReference>
<dbReference type="GO" id="GO:0006886">
    <property type="term" value="P:intracellular protein transport"/>
    <property type="evidence" value="ECO:0000318"/>
    <property type="project" value="GO_Central"/>
</dbReference>
<dbReference type="GO" id="GO:0006890">
    <property type="term" value="P:retrograde vesicle-mediated transport, Golgi to endoplasmic reticulum"/>
    <property type="evidence" value="ECO:0000316"/>
    <property type="project" value="WormBase"/>
</dbReference>
<dbReference type="GO" id="GO:0016192">
    <property type="term" value="P:vesicle-mediated transport"/>
    <property type="evidence" value="ECO:0000318"/>
    <property type="project" value="GO_Central"/>
</dbReference>
<dbReference type="CDD" id="cd04150">
    <property type="entry name" value="Arf1_5_like"/>
    <property type="match status" value="1"/>
</dbReference>
<dbReference type="FunFam" id="3.40.50.300:FF:003500">
    <property type="entry name" value="ADP-ribosylation factor 1"/>
    <property type="match status" value="1"/>
</dbReference>
<dbReference type="Gene3D" id="3.40.50.300">
    <property type="entry name" value="P-loop containing nucleotide triphosphate hydrolases"/>
    <property type="match status" value="1"/>
</dbReference>
<dbReference type="InterPro" id="IPR045872">
    <property type="entry name" value="Arf1-5-like"/>
</dbReference>
<dbReference type="InterPro" id="IPR027417">
    <property type="entry name" value="P-loop_NTPase"/>
</dbReference>
<dbReference type="InterPro" id="IPR005225">
    <property type="entry name" value="Small_GTP-bd"/>
</dbReference>
<dbReference type="InterPro" id="IPR024156">
    <property type="entry name" value="Small_GTPase_ARF"/>
</dbReference>
<dbReference type="InterPro" id="IPR006689">
    <property type="entry name" value="Small_GTPase_ARF/SAR"/>
</dbReference>
<dbReference type="NCBIfam" id="TIGR00231">
    <property type="entry name" value="small_GTP"/>
    <property type="match status" value="1"/>
</dbReference>
<dbReference type="PANTHER" id="PTHR11711">
    <property type="entry name" value="ADP RIBOSYLATION FACTOR-RELATED"/>
    <property type="match status" value="1"/>
</dbReference>
<dbReference type="Pfam" id="PF00025">
    <property type="entry name" value="Arf"/>
    <property type="match status" value="1"/>
</dbReference>
<dbReference type="PRINTS" id="PR00328">
    <property type="entry name" value="SAR1GTPBP"/>
</dbReference>
<dbReference type="SMART" id="SM00177">
    <property type="entry name" value="ARF"/>
    <property type="match status" value="1"/>
</dbReference>
<dbReference type="SMART" id="SM00175">
    <property type="entry name" value="RAB"/>
    <property type="match status" value="1"/>
</dbReference>
<dbReference type="SMART" id="SM00178">
    <property type="entry name" value="SAR"/>
    <property type="match status" value="1"/>
</dbReference>
<dbReference type="SUPFAM" id="SSF52540">
    <property type="entry name" value="P-loop containing nucleoside triphosphate hydrolases"/>
    <property type="match status" value="1"/>
</dbReference>
<dbReference type="PROSITE" id="PS51417">
    <property type="entry name" value="ARF"/>
    <property type="match status" value="1"/>
</dbReference>